<accession>Q3YRE0</accession>
<evidence type="ECO:0000255" key="1">
    <source>
        <dbReference type="HAMAP-Rule" id="MF_00031"/>
    </source>
</evidence>
<comment type="function">
    <text evidence="1">The RuvA-RuvB-RuvC complex processes Holliday junction (HJ) DNA during genetic recombination and DNA repair, while the RuvA-RuvB complex plays an important role in the rescue of blocked DNA replication forks via replication fork reversal (RFR). RuvA specifically binds to HJ cruciform DNA, conferring on it an open structure. The RuvB hexamer acts as an ATP-dependent pump, pulling dsDNA into and through the RuvAB complex. HJ branch migration allows RuvC to scan DNA until it finds its consensus sequence, where it cleaves and resolves the cruciform DNA.</text>
</comment>
<comment type="subunit">
    <text evidence="1">Homotetramer. Forms an RuvA(8)-RuvB(12)-Holliday junction (HJ) complex. HJ DNA is sandwiched between 2 RuvA tetramers; dsDNA enters through RuvA and exits via RuvB. An RuvB hexamer assembles on each DNA strand where it exits the tetramer. Each RuvB hexamer is contacted by two RuvA subunits (via domain III) on 2 adjacent RuvB subunits; this complex drives branch migration. In the full resolvosome a probable DNA-RuvA(4)-RuvB(12)-RuvC(2) complex forms which resolves the HJ.</text>
</comment>
<comment type="subcellular location">
    <subcellularLocation>
        <location evidence="1">Cytoplasm</location>
    </subcellularLocation>
</comment>
<comment type="domain">
    <text evidence="1">Has three domains with a flexible linker between the domains II and III and assumes an 'L' shape. Domain III is highly mobile and contacts RuvB.</text>
</comment>
<comment type="similarity">
    <text evidence="1">Belongs to the RuvA family.</text>
</comment>
<reference key="1">
    <citation type="journal article" date="2006" name="J. Bacteriol.">
        <title>The genome of the obligately intracellular bacterium Ehrlichia canis reveals themes of complex membrane structure and immune evasion strategies.</title>
        <authorList>
            <person name="Mavromatis K."/>
            <person name="Doyle C.K."/>
            <person name="Lykidis A."/>
            <person name="Ivanova N."/>
            <person name="Francino M.P."/>
            <person name="Chain P."/>
            <person name="Shin M."/>
            <person name="Malfatti S."/>
            <person name="Larimer F."/>
            <person name="Copeland A."/>
            <person name="Detter J.C."/>
            <person name="Land M."/>
            <person name="Richardson P.M."/>
            <person name="Yu X.J."/>
            <person name="Walker D.H."/>
            <person name="McBride J.W."/>
            <person name="Kyrpides N.C."/>
        </authorList>
    </citation>
    <scope>NUCLEOTIDE SEQUENCE [LARGE SCALE GENOMIC DNA]</scope>
    <source>
        <strain>Jake</strain>
    </source>
</reference>
<feature type="chain" id="PRO_0000224865" description="Holliday junction branch migration complex subunit RuvA">
    <location>
        <begin position="1"/>
        <end position="190"/>
    </location>
</feature>
<feature type="region of interest" description="Domain I" evidence="1">
    <location>
        <begin position="1"/>
        <end position="64"/>
    </location>
</feature>
<feature type="region of interest" description="Domain II" evidence="1">
    <location>
        <begin position="65"/>
        <end position="142"/>
    </location>
</feature>
<feature type="region of interest" description="Domain III" evidence="1">
    <location>
        <begin position="143"/>
        <end position="190"/>
    </location>
</feature>
<feature type="region of interest" description="Flexible linker" evidence="1">
    <location>
        <position position="143"/>
    </location>
</feature>
<keyword id="KW-0963">Cytoplasm</keyword>
<keyword id="KW-0227">DNA damage</keyword>
<keyword id="KW-0233">DNA recombination</keyword>
<keyword id="KW-0234">DNA repair</keyword>
<keyword id="KW-0238">DNA-binding</keyword>
<gene>
    <name evidence="1" type="primary">ruvA</name>
    <name type="ordered locus">Ecaj_0683</name>
</gene>
<name>RUVA_EHRCJ</name>
<dbReference type="EMBL" id="CP000107">
    <property type="protein sequence ID" value="AAZ68715.1"/>
    <property type="molecule type" value="Genomic_DNA"/>
</dbReference>
<dbReference type="RefSeq" id="WP_011304792.1">
    <property type="nucleotide sequence ID" value="NC_007354.1"/>
</dbReference>
<dbReference type="SMR" id="Q3YRE0"/>
<dbReference type="FunCoup" id="Q3YRE0">
    <property type="interactions" value="137"/>
</dbReference>
<dbReference type="STRING" id="269484.Ecaj_0683"/>
<dbReference type="KEGG" id="ecn:Ecaj_0683"/>
<dbReference type="eggNOG" id="COG0632">
    <property type="taxonomic scope" value="Bacteria"/>
</dbReference>
<dbReference type="HOGENOM" id="CLU_087936_3_0_5"/>
<dbReference type="InParanoid" id="Q3YRE0"/>
<dbReference type="Proteomes" id="UP000000435">
    <property type="component" value="Chromosome"/>
</dbReference>
<dbReference type="GO" id="GO:0005737">
    <property type="term" value="C:cytoplasm"/>
    <property type="evidence" value="ECO:0007669"/>
    <property type="project" value="UniProtKB-SubCell"/>
</dbReference>
<dbReference type="GO" id="GO:0009379">
    <property type="term" value="C:Holliday junction helicase complex"/>
    <property type="evidence" value="ECO:0007669"/>
    <property type="project" value="InterPro"/>
</dbReference>
<dbReference type="GO" id="GO:0048476">
    <property type="term" value="C:Holliday junction resolvase complex"/>
    <property type="evidence" value="ECO:0007669"/>
    <property type="project" value="UniProtKB-UniRule"/>
</dbReference>
<dbReference type="GO" id="GO:0005524">
    <property type="term" value="F:ATP binding"/>
    <property type="evidence" value="ECO:0007669"/>
    <property type="project" value="InterPro"/>
</dbReference>
<dbReference type="GO" id="GO:0000400">
    <property type="term" value="F:four-way junction DNA binding"/>
    <property type="evidence" value="ECO:0007669"/>
    <property type="project" value="UniProtKB-UniRule"/>
</dbReference>
<dbReference type="GO" id="GO:0009378">
    <property type="term" value="F:four-way junction helicase activity"/>
    <property type="evidence" value="ECO:0007669"/>
    <property type="project" value="InterPro"/>
</dbReference>
<dbReference type="GO" id="GO:0006310">
    <property type="term" value="P:DNA recombination"/>
    <property type="evidence" value="ECO:0007669"/>
    <property type="project" value="UniProtKB-UniRule"/>
</dbReference>
<dbReference type="GO" id="GO:0006281">
    <property type="term" value="P:DNA repair"/>
    <property type="evidence" value="ECO:0007669"/>
    <property type="project" value="UniProtKB-UniRule"/>
</dbReference>
<dbReference type="CDD" id="cd14332">
    <property type="entry name" value="UBA_RuvA_C"/>
    <property type="match status" value="1"/>
</dbReference>
<dbReference type="Gene3D" id="1.10.150.20">
    <property type="entry name" value="5' to 3' exonuclease, C-terminal subdomain"/>
    <property type="match status" value="1"/>
</dbReference>
<dbReference type="Gene3D" id="1.10.8.10">
    <property type="entry name" value="DNA helicase RuvA subunit, C-terminal domain"/>
    <property type="match status" value="1"/>
</dbReference>
<dbReference type="Gene3D" id="2.40.50.140">
    <property type="entry name" value="Nucleic acid-binding proteins"/>
    <property type="match status" value="1"/>
</dbReference>
<dbReference type="HAMAP" id="MF_00031">
    <property type="entry name" value="DNA_HJ_migration_RuvA"/>
    <property type="match status" value="1"/>
</dbReference>
<dbReference type="InterPro" id="IPR013849">
    <property type="entry name" value="DNA_helicase_Holl-junc_RuvA_I"/>
</dbReference>
<dbReference type="InterPro" id="IPR012340">
    <property type="entry name" value="NA-bd_OB-fold"/>
</dbReference>
<dbReference type="InterPro" id="IPR000085">
    <property type="entry name" value="RuvA"/>
</dbReference>
<dbReference type="InterPro" id="IPR010994">
    <property type="entry name" value="RuvA_2-like"/>
</dbReference>
<dbReference type="InterPro" id="IPR011114">
    <property type="entry name" value="RuvA_C"/>
</dbReference>
<dbReference type="InterPro" id="IPR036267">
    <property type="entry name" value="RuvA_C_sf"/>
</dbReference>
<dbReference type="NCBIfam" id="NF011194">
    <property type="entry name" value="PRK14600.1"/>
    <property type="match status" value="1"/>
</dbReference>
<dbReference type="NCBIfam" id="TIGR00084">
    <property type="entry name" value="ruvA"/>
    <property type="match status" value="1"/>
</dbReference>
<dbReference type="Pfam" id="PF14520">
    <property type="entry name" value="HHH_5"/>
    <property type="match status" value="1"/>
</dbReference>
<dbReference type="Pfam" id="PF07499">
    <property type="entry name" value="RuvA_C"/>
    <property type="match status" value="1"/>
</dbReference>
<dbReference type="Pfam" id="PF01330">
    <property type="entry name" value="RuvA_N"/>
    <property type="match status" value="1"/>
</dbReference>
<dbReference type="SUPFAM" id="SSF46929">
    <property type="entry name" value="DNA helicase RuvA subunit, C-terminal domain"/>
    <property type="match status" value="1"/>
</dbReference>
<dbReference type="SUPFAM" id="SSF50249">
    <property type="entry name" value="Nucleic acid-binding proteins"/>
    <property type="match status" value="1"/>
</dbReference>
<dbReference type="SUPFAM" id="SSF47781">
    <property type="entry name" value="RuvA domain 2-like"/>
    <property type="match status" value="1"/>
</dbReference>
<sequence length="190" mass="21446">MIGSLTGIIEEIYITYIILNVGNVGYIVHVSQRVLQTCKIGNNIKLYIETHVNRDNLTQLYGFLDKQEQDYMRMLITINGINYKTAMSILSKLSPEQIFSAVVSNNKNAFRGNGIGEKLAGRITTELQYKISKMPIEETLIIKEDDSLAALISLGYDKLKAFNAIQEIKSDFPNANIQEIIRKALQKLSQ</sequence>
<organism>
    <name type="scientific">Ehrlichia canis (strain Jake)</name>
    <dbReference type="NCBI Taxonomy" id="269484"/>
    <lineage>
        <taxon>Bacteria</taxon>
        <taxon>Pseudomonadati</taxon>
        <taxon>Pseudomonadota</taxon>
        <taxon>Alphaproteobacteria</taxon>
        <taxon>Rickettsiales</taxon>
        <taxon>Anaplasmataceae</taxon>
        <taxon>Ehrlichia</taxon>
    </lineage>
</organism>
<proteinExistence type="inferred from homology"/>
<protein>
    <recommendedName>
        <fullName evidence="1">Holliday junction branch migration complex subunit RuvA</fullName>
    </recommendedName>
</protein>